<proteinExistence type="inferred from homology"/>
<reference key="1">
    <citation type="journal article" date="2006" name="Genome Res.">
        <title>Skewed genomic variability in strains of the toxigenic bacterial pathogen, Clostridium perfringens.</title>
        <authorList>
            <person name="Myers G.S.A."/>
            <person name="Rasko D.A."/>
            <person name="Cheung J.K."/>
            <person name="Ravel J."/>
            <person name="Seshadri R."/>
            <person name="DeBoy R.T."/>
            <person name="Ren Q."/>
            <person name="Varga J."/>
            <person name="Awad M.M."/>
            <person name="Brinkac L.M."/>
            <person name="Daugherty S.C."/>
            <person name="Haft D.H."/>
            <person name="Dodson R.J."/>
            <person name="Madupu R."/>
            <person name="Nelson W.C."/>
            <person name="Rosovitz M.J."/>
            <person name="Sullivan S.A."/>
            <person name="Khouri H."/>
            <person name="Dimitrov G.I."/>
            <person name="Watkins K.L."/>
            <person name="Mulligan S."/>
            <person name="Benton J."/>
            <person name="Radune D."/>
            <person name="Fisher D.J."/>
            <person name="Atkins H.S."/>
            <person name="Hiscox T."/>
            <person name="Jost B.H."/>
            <person name="Billington S.J."/>
            <person name="Songer J.G."/>
            <person name="McClane B.A."/>
            <person name="Titball R.W."/>
            <person name="Rood J.I."/>
            <person name="Melville S.B."/>
            <person name="Paulsen I.T."/>
        </authorList>
    </citation>
    <scope>NUCLEOTIDE SEQUENCE [LARGE SCALE GENOMIC DNA]</scope>
    <source>
        <strain>ATCC 13124 / DSM 756 / JCM 1290 / NCIMB 6125 / NCTC 8237 / S 107 / Type A</strain>
    </source>
</reference>
<name>TMCAL_CLOP1</name>
<organism>
    <name type="scientific">Clostridium perfringens (strain ATCC 13124 / DSM 756 / JCM 1290 / NCIMB 6125 / NCTC 8237 / Type A)</name>
    <dbReference type="NCBI Taxonomy" id="195103"/>
    <lineage>
        <taxon>Bacteria</taxon>
        <taxon>Bacillati</taxon>
        <taxon>Bacillota</taxon>
        <taxon>Clostridia</taxon>
        <taxon>Eubacteriales</taxon>
        <taxon>Clostridiaceae</taxon>
        <taxon>Clostridium</taxon>
    </lineage>
</organism>
<accession>Q0TPM8</accession>
<gene>
    <name evidence="1" type="primary">tmcAL</name>
    <name type="ordered locus">CPF_1979</name>
</gene>
<protein>
    <recommendedName>
        <fullName evidence="1">tRNA(Met) cytidine acetate ligase</fullName>
        <ecNumber evidence="1">6.3.4.-</ecNumber>
    </recommendedName>
</protein>
<sequence>MNITGIITEYNPFHLGHELHLKSSKEITNCDGVICVMSGNFVQRGLPALTDKWTRTKMALEAGVDLVVELPTLFATSSAEFFAFGAVSLLNSLNVVNNICFGSECGDIDLIKKLSEIIINEPPLFKEYLKDYLKEGLPFPKARSKALMKYLDDNNYKIDFSYLEKVLNSSNNILAIEYCKSLYKLQSSIKPFTIQRLGADYNDEKLSKNEIASASAIRKSIYTSNIEESLDFMPEYSYNLLKNTSFSDLDKMFDLVKYAIVSNPNVLKEIPEASEGIDNKIIQNIGKANSLDELINLCKSKRYSYTRLNRILCHVLLNVNKDLLSLRKSSPNYVRILGFNNKGREILKEIKKNSEINIVNKLSKAKSDSLLEFDIKATNIYSFLNPSVKINSDYLISPIIFR</sequence>
<feature type="chain" id="PRO_0000300168" description="tRNA(Met) cytidine acetate ligase">
    <location>
        <begin position="1"/>
        <end position="402"/>
    </location>
</feature>
<feature type="binding site" evidence="1">
    <location>
        <begin position="7"/>
        <end position="20"/>
    </location>
    <ligand>
        <name>ATP</name>
        <dbReference type="ChEBI" id="CHEBI:30616"/>
    </ligand>
</feature>
<feature type="binding site" evidence="1">
    <location>
        <position position="102"/>
    </location>
    <ligand>
        <name>ATP</name>
        <dbReference type="ChEBI" id="CHEBI:30616"/>
    </ligand>
</feature>
<feature type="binding site" evidence="1">
    <location>
        <position position="171"/>
    </location>
    <ligand>
        <name>ATP</name>
        <dbReference type="ChEBI" id="CHEBI:30616"/>
    </ligand>
</feature>
<feature type="binding site" evidence="1">
    <location>
        <position position="196"/>
    </location>
    <ligand>
        <name>ATP</name>
        <dbReference type="ChEBI" id="CHEBI:30616"/>
    </ligand>
</feature>
<keyword id="KW-0067">ATP-binding</keyword>
<keyword id="KW-0963">Cytoplasm</keyword>
<keyword id="KW-0436">Ligase</keyword>
<keyword id="KW-0547">Nucleotide-binding</keyword>
<keyword id="KW-0694">RNA-binding</keyword>
<keyword id="KW-0819">tRNA processing</keyword>
<keyword id="KW-0820">tRNA-binding</keyword>
<comment type="function">
    <text evidence="1">Catalyzes the formation of N(4)-acetylcytidine (ac(4)C) at the wobble position of elongator tRNA(Met), using acetate and ATP as substrates. First activates an acetate ion to form acetyladenylate (Ac-AMP) and then transfers the acetyl group to tRNA to form ac(4)C34.</text>
</comment>
<comment type="catalytic activity">
    <reaction evidence="1">
        <text>cytidine(34) in elongator tRNA(Met) + acetate + ATP = N(4)-acetylcytidine(34) in elongator tRNA(Met) + AMP + diphosphate</text>
        <dbReference type="Rhea" id="RHEA:58144"/>
        <dbReference type="Rhea" id="RHEA-COMP:10693"/>
        <dbReference type="Rhea" id="RHEA-COMP:10694"/>
        <dbReference type="ChEBI" id="CHEBI:30089"/>
        <dbReference type="ChEBI" id="CHEBI:30616"/>
        <dbReference type="ChEBI" id="CHEBI:33019"/>
        <dbReference type="ChEBI" id="CHEBI:74900"/>
        <dbReference type="ChEBI" id="CHEBI:82748"/>
        <dbReference type="ChEBI" id="CHEBI:456215"/>
    </reaction>
</comment>
<comment type="subcellular location">
    <subcellularLocation>
        <location evidence="1">Cytoplasm</location>
    </subcellularLocation>
</comment>
<comment type="similarity">
    <text evidence="1">Belongs to the TmcAL family.</text>
</comment>
<dbReference type="EC" id="6.3.4.-" evidence="1"/>
<dbReference type="EMBL" id="CP000246">
    <property type="protein sequence ID" value="ABG84963.1"/>
    <property type="molecule type" value="Genomic_DNA"/>
</dbReference>
<dbReference type="RefSeq" id="WP_011590938.1">
    <property type="nucleotide sequence ID" value="NC_008261.1"/>
</dbReference>
<dbReference type="SMR" id="Q0TPM8"/>
<dbReference type="STRING" id="195103.CPF_1979"/>
<dbReference type="PaxDb" id="195103-CPF_1979"/>
<dbReference type="KEGG" id="cpf:CPF_1979"/>
<dbReference type="eggNOG" id="COG1323">
    <property type="taxonomic scope" value="Bacteria"/>
</dbReference>
<dbReference type="HOGENOM" id="CLU_038915_0_1_9"/>
<dbReference type="Proteomes" id="UP000001823">
    <property type="component" value="Chromosome"/>
</dbReference>
<dbReference type="GO" id="GO:0005737">
    <property type="term" value="C:cytoplasm"/>
    <property type="evidence" value="ECO:0007669"/>
    <property type="project" value="UniProtKB-SubCell"/>
</dbReference>
<dbReference type="GO" id="GO:0005524">
    <property type="term" value="F:ATP binding"/>
    <property type="evidence" value="ECO:0007669"/>
    <property type="project" value="UniProtKB-KW"/>
</dbReference>
<dbReference type="GO" id="GO:0016879">
    <property type="term" value="F:ligase activity, forming carbon-nitrogen bonds"/>
    <property type="evidence" value="ECO:0007669"/>
    <property type="project" value="UniProtKB-UniRule"/>
</dbReference>
<dbReference type="GO" id="GO:0000049">
    <property type="term" value="F:tRNA binding"/>
    <property type="evidence" value="ECO:0007669"/>
    <property type="project" value="UniProtKB-KW"/>
</dbReference>
<dbReference type="GO" id="GO:0006400">
    <property type="term" value="P:tRNA modification"/>
    <property type="evidence" value="ECO:0007669"/>
    <property type="project" value="UniProtKB-UniRule"/>
</dbReference>
<dbReference type="Gene3D" id="3.40.50.620">
    <property type="entry name" value="HUPs"/>
    <property type="match status" value="1"/>
</dbReference>
<dbReference type="HAMAP" id="MF_01539">
    <property type="entry name" value="TmcAL"/>
    <property type="match status" value="1"/>
</dbReference>
<dbReference type="InterPro" id="IPR014729">
    <property type="entry name" value="Rossmann-like_a/b/a_fold"/>
</dbReference>
<dbReference type="InterPro" id="IPR008513">
    <property type="entry name" value="tRNA(Met)_cyd_acetate_ligase"/>
</dbReference>
<dbReference type="NCBIfam" id="NF010191">
    <property type="entry name" value="PRK13670.1"/>
    <property type="match status" value="1"/>
</dbReference>
<dbReference type="PANTHER" id="PTHR37825">
    <property type="entry name" value="TRNA(MET) CYTIDINE ACETATE LIGASE"/>
    <property type="match status" value="1"/>
</dbReference>
<dbReference type="PANTHER" id="PTHR37825:SF1">
    <property type="entry name" value="TRNA(MET) CYTIDINE ACETATE LIGASE"/>
    <property type="match status" value="1"/>
</dbReference>
<dbReference type="Pfam" id="PF05636">
    <property type="entry name" value="HIGH_NTase1"/>
    <property type="match status" value="1"/>
</dbReference>
<dbReference type="SUPFAM" id="SSF52374">
    <property type="entry name" value="Nucleotidylyl transferase"/>
    <property type="match status" value="1"/>
</dbReference>
<evidence type="ECO:0000255" key="1">
    <source>
        <dbReference type="HAMAP-Rule" id="MF_01539"/>
    </source>
</evidence>